<reference key="1">
    <citation type="journal article" date="2012" name="Zygote">
        <title>Cloning and sequence analysis of Bufo arenarum oviductin cDNA and detection of its orthologous gene expression in the mouse female reproductive tract.</title>
        <authorList>
            <person name="Barrera D."/>
            <person name="Valdecantos P.A."/>
            <person name="Garcia E.V."/>
            <person name="Miceli D.C."/>
        </authorList>
    </citation>
    <scope>NUCLEOTIDE SEQUENCE [MRNA]</scope>
    <scope>TISSUE SPECIFICITY</scope>
</reference>
<reference key="2">
    <citation type="journal article" date="2005" name="Science">
        <title>The transcriptional landscape of the mammalian genome.</title>
        <authorList>
            <person name="Carninci P."/>
            <person name="Kasukawa T."/>
            <person name="Katayama S."/>
            <person name="Gough J."/>
            <person name="Frith M.C."/>
            <person name="Maeda N."/>
            <person name="Oyama R."/>
            <person name="Ravasi T."/>
            <person name="Lenhard B."/>
            <person name="Wells C."/>
            <person name="Kodzius R."/>
            <person name="Shimokawa K."/>
            <person name="Bajic V.B."/>
            <person name="Brenner S.E."/>
            <person name="Batalov S."/>
            <person name="Forrest A.R."/>
            <person name="Zavolan M."/>
            <person name="Davis M.J."/>
            <person name="Wilming L.G."/>
            <person name="Aidinis V."/>
            <person name="Allen J.E."/>
            <person name="Ambesi-Impiombato A."/>
            <person name="Apweiler R."/>
            <person name="Aturaliya R.N."/>
            <person name="Bailey T.L."/>
            <person name="Bansal M."/>
            <person name="Baxter L."/>
            <person name="Beisel K.W."/>
            <person name="Bersano T."/>
            <person name="Bono H."/>
            <person name="Chalk A.M."/>
            <person name="Chiu K.P."/>
            <person name="Choudhary V."/>
            <person name="Christoffels A."/>
            <person name="Clutterbuck D.R."/>
            <person name="Crowe M.L."/>
            <person name="Dalla E."/>
            <person name="Dalrymple B.P."/>
            <person name="de Bono B."/>
            <person name="Della Gatta G."/>
            <person name="di Bernardo D."/>
            <person name="Down T."/>
            <person name="Engstrom P."/>
            <person name="Fagiolini M."/>
            <person name="Faulkner G."/>
            <person name="Fletcher C.F."/>
            <person name="Fukushima T."/>
            <person name="Furuno M."/>
            <person name="Futaki S."/>
            <person name="Gariboldi M."/>
            <person name="Georgii-Hemming P."/>
            <person name="Gingeras T.R."/>
            <person name="Gojobori T."/>
            <person name="Green R.E."/>
            <person name="Gustincich S."/>
            <person name="Harbers M."/>
            <person name="Hayashi Y."/>
            <person name="Hensch T.K."/>
            <person name="Hirokawa N."/>
            <person name="Hill D."/>
            <person name="Huminiecki L."/>
            <person name="Iacono M."/>
            <person name="Ikeo K."/>
            <person name="Iwama A."/>
            <person name="Ishikawa T."/>
            <person name="Jakt M."/>
            <person name="Kanapin A."/>
            <person name="Katoh M."/>
            <person name="Kawasawa Y."/>
            <person name="Kelso J."/>
            <person name="Kitamura H."/>
            <person name="Kitano H."/>
            <person name="Kollias G."/>
            <person name="Krishnan S.P."/>
            <person name="Kruger A."/>
            <person name="Kummerfeld S.K."/>
            <person name="Kurochkin I.V."/>
            <person name="Lareau L.F."/>
            <person name="Lazarevic D."/>
            <person name="Lipovich L."/>
            <person name="Liu J."/>
            <person name="Liuni S."/>
            <person name="McWilliam S."/>
            <person name="Madan Babu M."/>
            <person name="Madera M."/>
            <person name="Marchionni L."/>
            <person name="Matsuda H."/>
            <person name="Matsuzawa S."/>
            <person name="Miki H."/>
            <person name="Mignone F."/>
            <person name="Miyake S."/>
            <person name="Morris K."/>
            <person name="Mottagui-Tabar S."/>
            <person name="Mulder N."/>
            <person name="Nakano N."/>
            <person name="Nakauchi H."/>
            <person name="Ng P."/>
            <person name="Nilsson R."/>
            <person name="Nishiguchi S."/>
            <person name="Nishikawa S."/>
            <person name="Nori F."/>
            <person name="Ohara O."/>
            <person name="Okazaki Y."/>
            <person name="Orlando V."/>
            <person name="Pang K.C."/>
            <person name="Pavan W.J."/>
            <person name="Pavesi G."/>
            <person name="Pesole G."/>
            <person name="Petrovsky N."/>
            <person name="Piazza S."/>
            <person name="Reed J."/>
            <person name="Reid J.F."/>
            <person name="Ring B.Z."/>
            <person name="Ringwald M."/>
            <person name="Rost B."/>
            <person name="Ruan Y."/>
            <person name="Salzberg S.L."/>
            <person name="Sandelin A."/>
            <person name="Schneider C."/>
            <person name="Schoenbach C."/>
            <person name="Sekiguchi K."/>
            <person name="Semple C.A."/>
            <person name="Seno S."/>
            <person name="Sessa L."/>
            <person name="Sheng Y."/>
            <person name="Shibata Y."/>
            <person name="Shimada H."/>
            <person name="Shimada K."/>
            <person name="Silva D."/>
            <person name="Sinclair B."/>
            <person name="Sperling S."/>
            <person name="Stupka E."/>
            <person name="Sugiura K."/>
            <person name="Sultana R."/>
            <person name="Takenaka Y."/>
            <person name="Taki K."/>
            <person name="Tammoja K."/>
            <person name="Tan S.L."/>
            <person name="Tang S."/>
            <person name="Taylor M.S."/>
            <person name="Tegner J."/>
            <person name="Teichmann S.A."/>
            <person name="Ueda H.R."/>
            <person name="van Nimwegen E."/>
            <person name="Verardo R."/>
            <person name="Wei C.L."/>
            <person name="Yagi K."/>
            <person name="Yamanishi H."/>
            <person name="Zabarovsky E."/>
            <person name="Zhu S."/>
            <person name="Zimmer A."/>
            <person name="Hide W."/>
            <person name="Bult C."/>
            <person name="Grimmond S.M."/>
            <person name="Teasdale R.D."/>
            <person name="Liu E.T."/>
            <person name="Brusic V."/>
            <person name="Quackenbush J."/>
            <person name="Wahlestedt C."/>
            <person name="Mattick J.S."/>
            <person name="Hume D.A."/>
            <person name="Kai C."/>
            <person name="Sasaki D."/>
            <person name="Tomaru Y."/>
            <person name="Fukuda S."/>
            <person name="Kanamori-Katayama M."/>
            <person name="Suzuki M."/>
            <person name="Aoki J."/>
            <person name="Arakawa T."/>
            <person name="Iida J."/>
            <person name="Imamura K."/>
            <person name="Itoh M."/>
            <person name="Kato T."/>
            <person name="Kawaji H."/>
            <person name="Kawagashira N."/>
            <person name="Kawashima T."/>
            <person name="Kojima M."/>
            <person name="Kondo S."/>
            <person name="Konno H."/>
            <person name="Nakano K."/>
            <person name="Ninomiya N."/>
            <person name="Nishio T."/>
            <person name="Okada M."/>
            <person name="Plessy C."/>
            <person name="Shibata K."/>
            <person name="Shiraki T."/>
            <person name="Suzuki S."/>
            <person name="Tagami M."/>
            <person name="Waki K."/>
            <person name="Watahiki A."/>
            <person name="Okamura-Oho Y."/>
            <person name="Suzuki H."/>
            <person name="Kawai J."/>
            <person name="Hayashizaki Y."/>
        </authorList>
    </citation>
    <scope>NUCLEOTIDE SEQUENCE [LARGE SCALE MRNA] (ISOFORM 2)</scope>
    <source>
        <strain>C57BL/6J</strain>
        <tissue>Epididymis</tissue>
    </source>
</reference>
<reference key="3">
    <citation type="journal article" date="2004" name="Genome Res.">
        <title>The status, quality, and expansion of the NIH full-length cDNA project: the Mammalian Gene Collection (MGC).</title>
        <authorList>
            <consortium name="The MGC Project Team"/>
        </authorList>
    </citation>
    <scope>NUCLEOTIDE SEQUENCE [LARGE SCALE MRNA] (ISOFORM 1)</scope>
    <source>
        <strain>C57BL/6J</strain>
        <tissue>Brain</tissue>
    </source>
</reference>
<reference key="4">
    <citation type="journal article" date="2003" name="Nat. Rev. Genet.">
        <title>Human and mouse proteases: a comparative genomic approach.</title>
        <authorList>
            <person name="Puente X.S."/>
            <person name="Sanchez L.M."/>
            <person name="Overall C.M."/>
            <person name="Lopez-Otin C."/>
        </authorList>
    </citation>
    <scope>IDENTIFICATION OF ISOFORM 1</scope>
    <source>
        <strain>C57BL/6J</strain>
    </source>
</reference>
<reference key="5">
    <citation type="journal article" date="2020" name="Science">
        <title>NELL2-mediated lumicrine signaling through OVCH2 is required for male fertility.</title>
        <authorList>
            <person name="Kiyozumi D."/>
            <person name="Noda T."/>
            <person name="Yamaguchi R."/>
            <person name="Tobita T."/>
            <person name="Matsumura T."/>
            <person name="Shimada K."/>
            <person name="Kodani M."/>
            <person name="Kohda T."/>
            <person name="Fujihara Y."/>
            <person name="Ozawa M."/>
            <person name="Yu Z."/>
            <person name="Miklossy G."/>
            <person name="Bohren K.M."/>
            <person name="Horie M."/>
            <person name="Okabe M."/>
            <person name="Matzuk M.M."/>
            <person name="Ikawa M."/>
        </authorList>
    </citation>
    <scope>TISSUE SPECIFICITY</scope>
    <scope>DISRUPTION PHENOTYPE</scope>
    <scope>FUNCTION</scope>
</reference>
<protein>
    <recommendedName>
        <fullName evidence="11">Ovochymase-2</fullName>
        <ecNumber evidence="3">3.4.21.-</ecNumber>
    </recommendedName>
    <alternativeName>
        <fullName evidence="2">Oviductin</fullName>
    </alternativeName>
</protein>
<keyword id="KW-0025">Alternative splicing</keyword>
<keyword id="KW-0106">Calcium</keyword>
<keyword id="KW-1015">Disulfide bond</keyword>
<keyword id="KW-0325">Glycoprotein</keyword>
<keyword id="KW-0378">Hydrolase</keyword>
<keyword id="KW-0479">Metal-binding</keyword>
<keyword id="KW-0645">Protease</keyword>
<keyword id="KW-1185">Reference proteome</keyword>
<keyword id="KW-0677">Repeat</keyword>
<keyword id="KW-0964">Secreted</keyword>
<keyword id="KW-0720">Serine protease</keyword>
<keyword id="KW-0732">Signal</keyword>
<keyword id="KW-0865">Zymogen</keyword>
<accession>Q7M761</accession>
<accession>Q8BZQ8</accession>
<name>OVCH2_MOUSE</name>
<sequence length="609" mass="67611">MPISKDKLILILGMVCLEQGHSETLSSIRNPDCGQSLVKPQPQNYFSLFSRIVGGSQVEKGSYPWQVSLKQKQKHICGGTIISSQWVITAAHCMANRNIALTLNVTAGEHDLSQAEPGEQTLAIETIIIHPQFSTRKPMIYDIALLKMAGTFQFGQFVRPVCLPEPGEHFNAGFICTTAGWGRLSEGGRLPQVLQQVNLPILTQEECEAVLLTLKNPITGKTFLCTGSPDGGRDACQGDSGGSLMCQNRKGAWTLAGVTSWGLGCGRSWRNNARKKEQGSPGIFTDLRRVLPWILKHIQTGHRRKSTKALCSEPDGLISGSEGELHFPESLHLYYESKQLCVWTFLVPEDMHMLLNLSHLDIESCHHNYLAMYSLEDRLVGKFCGENLPSSILIGSSSIRLRFISDATDYATGFNLTYKALKPRYHPDSGCRSLTILFEEGTIQSLHYPEDYSNMASCTWIFQAPNYCLIKLSFQSLEIEENGDCSSDYVTVHSDVEKEKEIARFCDYVIPSPVLSSSSVMLISFQSDENGTARGFQADISFISRADLNISISEDESVPLETWDLPPGAMEIFDAERDTHTKPPYEEDIGEMPAIDSGLLKQGERRGKH</sequence>
<evidence type="ECO:0000250" key="1"/>
<evidence type="ECO:0000250" key="2">
    <source>
        <dbReference type="UniProtKB" id="P79953"/>
    </source>
</evidence>
<evidence type="ECO:0000250" key="3">
    <source>
        <dbReference type="UniProtKB" id="Q7RTZ1"/>
    </source>
</evidence>
<evidence type="ECO:0000255" key="4"/>
<evidence type="ECO:0000255" key="5">
    <source>
        <dbReference type="PROSITE-ProRule" id="PRU00059"/>
    </source>
</evidence>
<evidence type="ECO:0000255" key="6">
    <source>
        <dbReference type="PROSITE-ProRule" id="PRU00274"/>
    </source>
</evidence>
<evidence type="ECO:0000256" key="7">
    <source>
        <dbReference type="SAM" id="MobiDB-lite"/>
    </source>
</evidence>
<evidence type="ECO:0000269" key="8">
    <source>
    </source>
</evidence>
<evidence type="ECO:0000269" key="9">
    <source>
    </source>
</evidence>
<evidence type="ECO:0000303" key="10">
    <source>
    </source>
</evidence>
<evidence type="ECO:0000305" key="11"/>
<evidence type="ECO:0000312" key="12">
    <source>
        <dbReference type="MGI" id="MGI:3045251"/>
    </source>
</evidence>
<gene>
    <name evidence="12" type="primary">Ovch2</name>
    <name type="synonym">Ovtn</name>
</gene>
<dbReference type="EC" id="3.4.21.-" evidence="3"/>
<dbReference type="EMBL" id="AK033776">
    <property type="protein sequence ID" value="BAC28471.1"/>
    <property type="molecule type" value="mRNA"/>
</dbReference>
<dbReference type="EMBL" id="BC125284">
    <property type="protein sequence ID" value="AAI25285.1"/>
    <property type="molecule type" value="mRNA"/>
</dbReference>
<dbReference type="EMBL" id="BC125288">
    <property type="protein sequence ID" value="AAI25289.1"/>
    <property type="molecule type" value="mRNA"/>
</dbReference>
<dbReference type="EMBL" id="BN000123">
    <property type="protein sequence ID" value="CAD67553.1"/>
    <property type="molecule type" value="mRNA"/>
</dbReference>
<dbReference type="CCDS" id="CCDS21692.1">
    <molecule id="Q7M761-1"/>
</dbReference>
<dbReference type="RefSeq" id="NP_766496.2">
    <molecule id="Q7M761-1"/>
    <property type="nucleotide sequence ID" value="NM_172908.3"/>
</dbReference>
<dbReference type="SMR" id="Q7M761"/>
<dbReference type="FunCoup" id="Q7M761">
    <property type="interactions" value="4"/>
</dbReference>
<dbReference type="STRING" id="10090.ENSMUSP00000102366"/>
<dbReference type="MEROPS" id="S01.320"/>
<dbReference type="GlyCosmos" id="Q7M761">
    <property type="glycosylation" value="5 sites, No reported glycans"/>
</dbReference>
<dbReference type="GlyGen" id="Q7M761">
    <property type="glycosylation" value="5 sites"/>
</dbReference>
<dbReference type="PhosphoSitePlus" id="Q7M761"/>
<dbReference type="PaxDb" id="10090-ENSMUSP00000102366"/>
<dbReference type="ProteomicsDB" id="294409">
    <molecule id="Q7M761-1"/>
</dbReference>
<dbReference type="ProteomicsDB" id="294410">
    <molecule id="Q7M761-2"/>
</dbReference>
<dbReference type="Antibodypedia" id="73573">
    <property type="antibodies" value="15 antibodies from 5 providers"/>
</dbReference>
<dbReference type="DNASU" id="244199"/>
<dbReference type="Ensembl" id="ENSMUST00000106755.3">
    <molecule id="Q7M761-1"/>
    <property type="protein sequence ID" value="ENSMUSP00000102366.3"/>
    <property type="gene ID" value="ENSMUSG00000048236.9"/>
</dbReference>
<dbReference type="GeneID" id="244199"/>
<dbReference type="KEGG" id="mmu:244199"/>
<dbReference type="UCSC" id="uc009jbk.1">
    <molecule id="Q7M761-1"/>
    <property type="organism name" value="mouse"/>
</dbReference>
<dbReference type="AGR" id="MGI:3045251"/>
<dbReference type="CTD" id="341277"/>
<dbReference type="MGI" id="MGI:3045251">
    <property type="gene designation" value="Ovch2"/>
</dbReference>
<dbReference type="VEuPathDB" id="HostDB:ENSMUSG00000048236"/>
<dbReference type="eggNOG" id="KOG3627">
    <property type="taxonomic scope" value="Eukaryota"/>
</dbReference>
<dbReference type="GeneTree" id="ENSGT00940000157791"/>
<dbReference type="HOGENOM" id="CLU_034620_0_0_1"/>
<dbReference type="InParanoid" id="Q7M761"/>
<dbReference type="OMA" id="GAFQFDH"/>
<dbReference type="OrthoDB" id="6380398at2759"/>
<dbReference type="PhylomeDB" id="Q7M761"/>
<dbReference type="TreeFam" id="TF326419"/>
<dbReference type="BRENDA" id="3.4.21.120">
    <property type="organism ID" value="3474"/>
</dbReference>
<dbReference type="BioGRID-ORCS" id="244199">
    <property type="hits" value="2 hits in 78 CRISPR screens"/>
</dbReference>
<dbReference type="PRO" id="PR:Q7M761"/>
<dbReference type="Proteomes" id="UP000000589">
    <property type="component" value="Chromosome 7"/>
</dbReference>
<dbReference type="RNAct" id="Q7M761">
    <property type="molecule type" value="protein"/>
</dbReference>
<dbReference type="Bgee" id="ENSMUSG00000048236">
    <property type="expression patterns" value="Expressed in anatomical structure and 1 other cell type or tissue"/>
</dbReference>
<dbReference type="GO" id="GO:0005576">
    <property type="term" value="C:extracellular region"/>
    <property type="evidence" value="ECO:0007669"/>
    <property type="project" value="UniProtKB-SubCell"/>
</dbReference>
<dbReference type="GO" id="GO:0046872">
    <property type="term" value="F:metal ion binding"/>
    <property type="evidence" value="ECO:0007669"/>
    <property type="project" value="UniProtKB-KW"/>
</dbReference>
<dbReference type="GO" id="GO:0004252">
    <property type="term" value="F:serine-type endopeptidase activity"/>
    <property type="evidence" value="ECO:0000250"/>
    <property type="project" value="UniProtKB"/>
</dbReference>
<dbReference type="GO" id="GO:0009566">
    <property type="term" value="P:fertilization"/>
    <property type="evidence" value="ECO:0000315"/>
    <property type="project" value="UniProtKB"/>
</dbReference>
<dbReference type="GO" id="GO:0006508">
    <property type="term" value="P:proteolysis"/>
    <property type="evidence" value="ECO:0007669"/>
    <property type="project" value="UniProtKB-KW"/>
</dbReference>
<dbReference type="CDD" id="cd00041">
    <property type="entry name" value="CUB"/>
    <property type="match status" value="2"/>
</dbReference>
<dbReference type="CDD" id="cd00190">
    <property type="entry name" value="Tryp_SPc"/>
    <property type="match status" value="1"/>
</dbReference>
<dbReference type="FunFam" id="2.60.120.290:FF:000005">
    <property type="entry name" value="Procollagen C-endopeptidase enhancer 1"/>
    <property type="match status" value="1"/>
</dbReference>
<dbReference type="FunFam" id="2.40.10.10:FF:000003">
    <property type="entry name" value="Transmembrane serine protease 3"/>
    <property type="match status" value="1"/>
</dbReference>
<dbReference type="Gene3D" id="2.60.120.290">
    <property type="entry name" value="Spermadhesin, CUB domain"/>
    <property type="match status" value="2"/>
</dbReference>
<dbReference type="Gene3D" id="2.40.10.10">
    <property type="entry name" value="Trypsin-like serine proteases"/>
    <property type="match status" value="1"/>
</dbReference>
<dbReference type="InterPro" id="IPR000859">
    <property type="entry name" value="CUB_dom"/>
</dbReference>
<dbReference type="InterPro" id="IPR009003">
    <property type="entry name" value="Peptidase_S1_PA"/>
</dbReference>
<dbReference type="InterPro" id="IPR043504">
    <property type="entry name" value="Peptidase_S1_PA_chymotrypsin"/>
</dbReference>
<dbReference type="InterPro" id="IPR001314">
    <property type="entry name" value="Peptidase_S1A"/>
</dbReference>
<dbReference type="InterPro" id="IPR035914">
    <property type="entry name" value="Sperma_CUB_dom_sf"/>
</dbReference>
<dbReference type="InterPro" id="IPR001254">
    <property type="entry name" value="Trypsin_dom"/>
</dbReference>
<dbReference type="InterPro" id="IPR018114">
    <property type="entry name" value="TRYPSIN_HIS"/>
</dbReference>
<dbReference type="InterPro" id="IPR033116">
    <property type="entry name" value="TRYPSIN_SER"/>
</dbReference>
<dbReference type="PANTHER" id="PTHR24252:SF8">
    <property type="entry name" value="ACROSIN"/>
    <property type="match status" value="1"/>
</dbReference>
<dbReference type="PANTHER" id="PTHR24252">
    <property type="entry name" value="ACROSIN-RELATED"/>
    <property type="match status" value="1"/>
</dbReference>
<dbReference type="Pfam" id="PF00431">
    <property type="entry name" value="CUB"/>
    <property type="match status" value="2"/>
</dbReference>
<dbReference type="Pfam" id="PF00089">
    <property type="entry name" value="Trypsin"/>
    <property type="match status" value="1"/>
</dbReference>
<dbReference type="PRINTS" id="PR00722">
    <property type="entry name" value="CHYMOTRYPSIN"/>
</dbReference>
<dbReference type="SMART" id="SM00042">
    <property type="entry name" value="CUB"/>
    <property type="match status" value="2"/>
</dbReference>
<dbReference type="SMART" id="SM00020">
    <property type="entry name" value="Tryp_SPc"/>
    <property type="match status" value="1"/>
</dbReference>
<dbReference type="SUPFAM" id="SSF49854">
    <property type="entry name" value="Spermadhesin, CUB domain"/>
    <property type="match status" value="2"/>
</dbReference>
<dbReference type="SUPFAM" id="SSF50494">
    <property type="entry name" value="Trypsin-like serine proteases"/>
    <property type="match status" value="1"/>
</dbReference>
<dbReference type="PROSITE" id="PS01180">
    <property type="entry name" value="CUB"/>
    <property type="match status" value="2"/>
</dbReference>
<dbReference type="PROSITE" id="PS50240">
    <property type="entry name" value="TRYPSIN_DOM"/>
    <property type="match status" value="1"/>
</dbReference>
<dbReference type="PROSITE" id="PS00134">
    <property type="entry name" value="TRYPSIN_HIS"/>
    <property type="match status" value="1"/>
</dbReference>
<dbReference type="PROSITE" id="PS00135">
    <property type="entry name" value="TRYPSIN_SER"/>
    <property type="match status" value="1"/>
</dbReference>
<feature type="signal peptide" evidence="4">
    <location>
        <begin position="1"/>
        <end position="22"/>
    </location>
</feature>
<feature type="propeptide" id="PRO_0000261183" description="Activation peptide" evidence="1">
    <location>
        <begin position="23"/>
        <end position="51"/>
    </location>
</feature>
<feature type="chain" id="PRO_0000261184" description="Ovochymase-2">
    <location>
        <begin position="52"/>
        <end position="609"/>
    </location>
</feature>
<feature type="domain" description="Peptidase S1" evidence="6">
    <location>
        <begin position="52"/>
        <end position="299"/>
    </location>
</feature>
<feature type="domain" description="CUB 1" evidence="5">
    <location>
        <begin position="311"/>
        <end position="421"/>
    </location>
</feature>
<feature type="domain" description="CUB 2" evidence="5">
    <location>
        <begin position="431"/>
        <end position="543"/>
    </location>
</feature>
<feature type="region of interest" description="Disordered" evidence="7">
    <location>
        <begin position="580"/>
        <end position="609"/>
    </location>
</feature>
<feature type="active site" description="Charge relay system" evidence="1">
    <location>
        <position position="92"/>
    </location>
</feature>
<feature type="active site" description="Charge relay system" evidence="1">
    <location>
        <position position="142"/>
    </location>
</feature>
<feature type="active site" description="Charge relay system" evidence="1">
    <location>
        <position position="240"/>
    </location>
</feature>
<feature type="binding site" evidence="1">
    <location>
        <position position="119"/>
    </location>
    <ligand>
        <name>Ca(2+)</name>
        <dbReference type="ChEBI" id="CHEBI:29108"/>
    </ligand>
</feature>
<feature type="glycosylation site" description="N-linked (GlcNAc...) asparagine" evidence="4">
    <location>
        <position position="104"/>
    </location>
</feature>
<feature type="glycosylation site" description="N-linked (GlcNAc...) asparagine" evidence="4">
    <location>
        <position position="356"/>
    </location>
</feature>
<feature type="glycosylation site" description="N-linked (GlcNAc...) asparagine" evidence="4">
    <location>
        <position position="415"/>
    </location>
</feature>
<feature type="glycosylation site" description="N-linked (GlcNAc...) asparagine" evidence="4">
    <location>
        <position position="530"/>
    </location>
</feature>
<feature type="glycosylation site" description="N-linked (GlcNAc...) asparagine" evidence="4">
    <location>
        <position position="549"/>
    </location>
</feature>
<feature type="disulfide bond" evidence="1">
    <location>
        <begin position="77"/>
        <end position="93"/>
    </location>
</feature>
<feature type="disulfide bond" evidence="1">
    <location>
        <begin position="176"/>
        <end position="246"/>
    </location>
</feature>
<feature type="disulfide bond" evidence="1">
    <location>
        <begin position="207"/>
        <end position="225"/>
    </location>
</feature>
<feature type="disulfide bond" evidence="1">
    <location>
        <begin position="236"/>
        <end position="265"/>
    </location>
</feature>
<feature type="disulfide bond" evidence="1">
    <location>
        <begin position="311"/>
        <end position="341"/>
    </location>
</feature>
<feature type="disulfide bond" evidence="1">
    <location>
        <begin position="365"/>
        <end position="384"/>
    </location>
</feature>
<feature type="disulfide bond" evidence="1">
    <location>
        <begin position="431"/>
        <end position="458"/>
    </location>
</feature>
<feature type="disulfide bond" evidence="1">
    <location>
        <begin position="485"/>
        <end position="506"/>
    </location>
</feature>
<feature type="splice variant" id="VSP_021668" description="In isoform 2." evidence="10">
    <location>
        <begin position="1"/>
        <end position="93"/>
    </location>
</feature>
<comment type="function">
    <text evidence="3 9">May be required for sperm ADAM3 processing and consequential sperm fertilizing ability (PubMed:32499443). In vitro, has an endopeptidase activity (By similarity).</text>
</comment>
<comment type="subcellular location">
    <subcellularLocation>
        <location evidence="2">Secreted</location>
    </subcellularLocation>
</comment>
<comment type="alternative products">
    <event type="alternative splicing"/>
    <isoform>
        <id>Q7M761-1</id>
        <name>1</name>
        <sequence type="displayed"/>
    </isoform>
    <isoform>
        <id>Q7M761-2</id>
        <name>2</name>
        <sequence type="described" ref="VSP_021668"/>
    </isoform>
</comment>
<comment type="tissue specificity">
    <text evidence="8 9">Only expressed in uterus tissue (PubMed:20810007). Expressed in the initial segment (IS) of the caput epididymis, the region most proximal to the testis (PubMed:32499443).</text>
</comment>
<comment type="disruption phenotype">
    <text evidence="9">Knockout male mice lacking OVCH2 are sterile.</text>
</comment>
<comment type="similarity">
    <text evidence="6">Belongs to the peptidase S1 family.</text>
</comment>
<proteinExistence type="evidence at transcript level"/>
<organism>
    <name type="scientific">Mus musculus</name>
    <name type="common">Mouse</name>
    <dbReference type="NCBI Taxonomy" id="10090"/>
    <lineage>
        <taxon>Eukaryota</taxon>
        <taxon>Metazoa</taxon>
        <taxon>Chordata</taxon>
        <taxon>Craniata</taxon>
        <taxon>Vertebrata</taxon>
        <taxon>Euteleostomi</taxon>
        <taxon>Mammalia</taxon>
        <taxon>Eutheria</taxon>
        <taxon>Euarchontoglires</taxon>
        <taxon>Glires</taxon>
        <taxon>Rodentia</taxon>
        <taxon>Myomorpha</taxon>
        <taxon>Muroidea</taxon>
        <taxon>Muridae</taxon>
        <taxon>Murinae</taxon>
        <taxon>Mus</taxon>
        <taxon>Mus</taxon>
    </lineage>
</organism>